<evidence type="ECO:0000255" key="1">
    <source>
        <dbReference type="HAMAP-Rule" id="MF_00108"/>
    </source>
</evidence>
<reference key="1">
    <citation type="journal article" date="2005" name="J. Bacteriol.">
        <title>Genomic sequence of an otitis media isolate of nontypeable Haemophilus influenzae: comparative study with H. influenzae serotype d, strain KW20.</title>
        <authorList>
            <person name="Harrison A."/>
            <person name="Dyer D.W."/>
            <person name="Gillaspy A."/>
            <person name="Ray W.C."/>
            <person name="Mungur R."/>
            <person name="Carson M.B."/>
            <person name="Zhong H."/>
            <person name="Gipson J."/>
            <person name="Gipson M."/>
            <person name="Johnson L.S."/>
            <person name="Lewis L."/>
            <person name="Bakaletz L.O."/>
            <person name="Munson R.S. Jr."/>
        </authorList>
    </citation>
    <scope>NUCLEOTIDE SEQUENCE [LARGE SCALE GENOMIC DNA]</scope>
    <source>
        <strain>86-028NP</strain>
    </source>
</reference>
<accession>Q4QMP4</accession>
<name>ISPD_HAEI8</name>
<protein>
    <recommendedName>
        <fullName evidence="1">2-C-methyl-D-erythritol 4-phosphate cytidylyltransferase</fullName>
        <ecNumber evidence="1">2.7.7.60</ecNumber>
    </recommendedName>
    <alternativeName>
        <fullName evidence="1">4-diphosphocytidyl-2C-methyl-D-erythritol synthase</fullName>
    </alternativeName>
    <alternativeName>
        <fullName evidence="1">MEP cytidylyltransferase</fullName>
        <shortName evidence="1">MCT</shortName>
    </alternativeName>
</protein>
<sequence>MTRSIIAVLPAAGVGSRMQADKPKQYLTLLGKTLLEHTLDVMLSYPAVSKIILAVSKDDPYISTLSLDPKIQLVEGGTTRAESVLNGLNAIAEKNAWVLVHDAARPCLQHADIDKLLAIEDKQGAILAIPVTDTIKRADNQQCIVKTEDRSQLWQAMTPQFFPVDILRDALSTGIQQGANITDEASAIELAGFRPHLVAGRSDNLKVTRPEDLALAEFYLTRNKL</sequence>
<dbReference type="EC" id="2.7.7.60" evidence="1"/>
<dbReference type="EMBL" id="CP000057">
    <property type="protein sequence ID" value="AAX87703.1"/>
    <property type="molecule type" value="Genomic_DNA"/>
</dbReference>
<dbReference type="RefSeq" id="WP_011272161.1">
    <property type="nucleotide sequence ID" value="NC_007146.2"/>
</dbReference>
<dbReference type="SMR" id="Q4QMP4"/>
<dbReference type="KEGG" id="hit:NTHI0794"/>
<dbReference type="HOGENOM" id="CLU_061281_3_1_6"/>
<dbReference type="UniPathway" id="UPA00056">
    <property type="reaction ID" value="UER00093"/>
</dbReference>
<dbReference type="Proteomes" id="UP000002525">
    <property type="component" value="Chromosome"/>
</dbReference>
<dbReference type="GO" id="GO:0050518">
    <property type="term" value="F:2-C-methyl-D-erythritol 4-phosphate cytidylyltransferase activity"/>
    <property type="evidence" value="ECO:0007669"/>
    <property type="project" value="UniProtKB-UniRule"/>
</dbReference>
<dbReference type="GO" id="GO:0019288">
    <property type="term" value="P:isopentenyl diphosphate biosynthetic process, methylerythritol 4-phosphate pathway"/>
    <property type="evidence" value="ECO:0007669"/>
    <property type="project" value="UniProtKB-UniRule"/>
</dbReference>
<dbReference type="CDD" id="cd02516">
    <property type="entry name" value="CDP-ME_synthetase"/>
    <property type="match status" value="1"/>
</dbReference>
<dbReference type="FunFam" id="3.90.550.10:FF:000003">
    <property type="entry name" value="2-C-methyl-D-erythritol 4-phosphate cytidylyltransferase"/>
    <property type="match status" value="1"/>
</dbReference>
<dbReference type="Gene3D" id="3.90.550.10">
    <property type="entry name" value="Spore Coat Polysaccharide Biosynthesis Protein SpsA, Chain A"/>
    <property type="match status" value="1"/>
</dbReference>
<dbReference type="HAMAP" id="MF_00108">
    <property type="entry name" value="IspD"/>
    <property type="match status" value="1"/>
</dbReference>
<dbReference type="InterPro" id="IPR001228">
    <property type="entry name" value="IspD"/>
</dbReference>
<dbReference type="InterPro" id="IPR034683">
    <property type="entry name" value="IspD/TarI"/>
</dbReference>
<dbReference type="InterPro" id="IPR050088">
    <property type="entry name" value="IspD/TarI_cytidylyltransf_bact"/>
</dbReference>
<dbReference type="InterPro" id="IPR018294">
    <property type="entry name" value="ISPD_synthase_CS"/>
</dbReference>
<dbReference type="InterPro" id="IPR029044">
    <property type="entry name" value="Nucleotide-diphossugar_trans"/>
</dbReference>
<dbReference type="NCBIfam" id="TIGR00453">
    <property type="entry name" value="ispD"/>
    <property type="match status" value="1"/>
</dbReference>
<dbReference type="PANTHER" id="PTHR32125">
    <property type="entry name" value="2-C-METHYL-D-ERYTHRITOL 4-PHOSPHATE CYTIDYLYLTRANSFERASE, CHLOROPLASTIC"/>
    <property type="match status" value="1"/>
</dbReference>
<dbReference type="PANTHER" id="PTHR32125:SF4">
    <property type="entry name" value="2-C-METHYL-D-ERYTHRITOL 4-PHOSPHATE CYTIDYLYLTRANSFERASE, CHLOROPLASTIC"/>
    <property type="match status" value="1"/>
</dbReference>
<dbReference type="Pfam" id="PF01128">
    <property type="entry name" value="IspD"/>
    <property type="match status" value="1"/>
</dbReference>
<dbReference type="SUPFAM" id="SSF53448">
    <property type="entry name" value="Nucleotide-diphospho-sugar transferases"/>
    <property type="match status" value="1"/>
</dbReference>
<dbReference type="PROSITE" id="PS01295">
    <property type="entry name" value="ISPD"/>
    <property type="match status" value="1"/>
</dbReference>
<keyword id="KW-0414">Isoprene biosynthesis</keyword>
<keyword id="KW-0548">Nucleotidyltransferase</keyword>
<keyword id="KW-0808">Transferase</keyword>
<organism>
    <name type="scientific">Haemophilus influenzae (strain 86-028NP)</name>
    <dbReference type="NCBI Taxonomy" id="281310"/>
    <lineage>
        <taxon>Bacteria</taxon>
        <taxon>Pseudomonadati</taxon>
        <taxon>Pseudomonadota</taxon>
        <taxon>Gammaproteobacteria</taxon>
        <taxon>Pasteurellales</taxon>
        <taxon>Pasteurellaceae</taxon>
        <taxon>Haemophilus</taxon>
    </lineage>
</organism>
<comment type="function">
    <text evidence="1">Catalyzes the formation of 4-diphosphocytidyl-2-C-methyl-D-erythritol from CTP and 2-C-methyl-D-erythritol 4-phosphate (MEP).</text>
</comment>
<comment type="catalytic activity">
    <reaction evidence="1">
        <text>2-C-methyl-D-erythritol 4-phosphate + CTP + H(+) = 4-CDP-2-C-methyl-D-erythritol + diphosphate</text>
        <dbReference type="Rhea" id="RHEA:13429"/>
        <dbReference type="ChEBI" id="CHEBI:15378"/>
        <dbReference type="ChEBI" id="CHEBI:33019"/>
        <dbReference type="ChEBI" id="CHEBI:37563"/>
        <dbReference type="ChEBI" id="CHEBI:57823"/>
        <dbReference type="ChEBI" id="CHEBI:58262"/>
        <dbReference type="EC" id="2.7.7.60"/>
    </reaction>
</comment>
<comment type="pathway">
    <text evidence="1">Isoprenoid biosynthesis; isopentenyl diphosphate biosynthesis via DXP pathway; isopentenyl diphosphate from 1-deoxy-D-xylulose 5-phosphate: step 2/6.</text>
</comment>
<comment type="similarity">
    <text evidence="1">Belongs to the IspD/TarI cytidylyltransferase family. IspD subfamily.</text>
</comment>
<proteinExistence type="inferred from homology"/>
<gene>
    <name evidence="1" type="primary">ispD</name>
    <name type="ordered locus">NTHI0794</name>
</gene>
<feature type="chain" id="PRO_0000237793" description="2-C-methyl-D-erythritol 4-phosphate cytidylyltransferase">
    <location>
        <begin position="1"/>
        <end position="225"/>
    </location>
</feature>
<feature type="site" description="Transition state stabilizer" evidence="1">
    <location>
        <position position="17"/>
    </location>
</feature>
<feature type="site" description="Transition state stabilizer" evidence="1">
    <location>
        <position position="24"/>
    </location>
</feature>
<feature type="site" description="Positions MEP for the nucleophilic attack" evidence="1">
    <location>
        <position position="150"/>
    </location>
</feature>
<feature type="site" description="Positions MEP for the nucleophilic attack" evidence="1">
    <location>
        <position position="206"/>
    </location>
</feature>